<evidence type="ECO:0000255" key="1">
    <source>
        <dbReference type="HAMAP-Rule" id="MF_02001"/>
    </source>
</evidence>
<evidence type="ECO:0000255" key="2">
    <source>
        <dbReference type="PROSITE-ProRule" id="PRU00285"/>
    </source>
</evidence>
<evidence type="ECO:0000305" key="3"/>
<keyword id="KW-0143">Chaperone</keyword>
<keyword id="KW-0963">Cytoplasm</keyword>
<keyword id="KW-1185">Reference proteome</keyword>
<keyword id="KW-0346">Stress response</keyword>
<reference key="1">
    <citation type="journal article" date="2001" name="Nature">
        <title>Genome sequence of enterohaemorrhagic Escherichia coli O157:H7.</title>
        <authorList>
            <person name="Perna N.T."/>
            <person name="Plunkett G. III"/>
            <person name="Burland V."/>
            <person name="Mau B."/>
            <person name="Glasner J.D."/>
            <person name="Rose D.J."/>
            <person name="Mayhew G.F."/>
            <person name="Evans P.S."/>
            <person name="Gregor J."/>
            <person name="Kirkpatrick H.A."/>
            <person name="Posfai G."/>
            <person name="Hackett J."/>
            <person name="Klink S."/>
            <person name="Boutin A."/>
            <person name="Shao Y."/>
            <person name="Miller L."/>
            <person name="Grotbeck E.J."/>
            <person name="Davis N.W."/>
            <person name="Lim A."/>
            <person name="Dimalanta E.T."/>
            <person name="Potamousis K."/>
            <person name="Apodaca J."/>
            <person name="Anantharaman T.S."/>
            <person name="Lin J."/>
            <person name="Yen G."/>
            <person name="Schwartz D.C."/>
            <person name="Welch R.A."/>
            <person name="Blattner F.R."/>
        </authorList>
    </citation>
    <scope>NUCLEOTIDE SEQUENCE [LARGE SCALE GENOMIC DNA]</scope>
    <source>
        <strain>O157:H7 / EDL933 / ATCC 700927 / EHEC</strain>
    </source>
</reference>
<reference key="2">
    <citation type="journal article" date="2001" name="DNA Res.">
        <title>Complete genome sequence of enterohemorrhagic Escherichia coli O157:H7 and genomic comparison with a laboratory strain K-12.</title>
        <authorList>
            <person name="Hayashi T."/>
            <person name="Makino K."/>
            <person name="Ohnishi M."/>
            <person name="Kurokawa K."/>
            <person name="Ishii K."/>
            <person name="Yokoyama K."/>
            <person name="Han C.-G."/>
            <person name="Ohtsubo E."/>
            <person name="Nakayama K."/>
            <person name="Murata T."/>
            <person name="Tanaka M."/>
            <person name="Tobe T."/>
            <person name="Iida T."/>
            <person name="Takami H."/>
            <person name="Honda T."/>
            <person name="Sasakawa C."/>
            <person name="Ogasawara N."/>
            <person name="Yasunaga T."/>
            <person name="Kuhara S."/>
            <person name="Shiba T."/>
            <person name="Hattori M."/>
            <person name="Shinagawa H."/>
        </authorList>
    </citation>
    <scope>NUCLEOTIDE SEQUENCE [LARGE SCALE GENOMIC DNA]</scope>
    <source>
        <strain>O157:H7 / Sakai / RIMD 0509952 / EHEC</strain>
    </source>
</reference>
<proteinExistence type="inferred from homology"/>
<sequence>MRNFDLSPLMRQWIGFDKLANALQNAGESQSFPPYNIEKSDDNHYRITLALAGFRQEDLEIQLEGTRLSVKGTPEQPKEEKKWLHQGLMNQPFSLSFTLAENMEVSGATFVNGLLHIDLIRNEPEPIAAQRIAISERPALNS</sequence>
<comment type="function">
    <text evidence="1">Associates with aggregated proteins, together with IbpA, to stabilize and protect them from irreversible denaturation and extensive proteolysis during heat shock and oxidative stress. Aggregated proteins bound to the IbpAB complex are more efficiently refolded and reactivated by the ATP-dependent chaperone systems ClpB and DnaK/DnaJ/GrpE. Its activity is ATP-independent.</text>
</comment>
<comment type="subunit">
    <text evidence="1">Homodimer. Forms homomultimers of about 100-150 subunits at optimal growth temperatures. Conformation changes to oligomers at high temperatures or high ionic concentrations. The decrease in size of the multimers is accompanied by an increase in chaperone activity.</text>
</comment>
<comment type="subcellular location">
    <subcellularLocation>
        <location evidence="1">Cytoplasm</location>
    </subcellularLocation>
</comment>
<comment type="domain">
    <text evidence="1">The N- and C-terminal flexible termini are involved in oligomerization and in the binding of non-native substrate proteins, and are essential for chaperone activity.</text>
</comment>
<comment type="similarity">
    <text evidence="1 2">Belongs to the small heat shock protein (HSP20) family.</text>
</comment>
<comment type="sequence caution" evidence="3">
    <conflict type="erroneous initiation">
        <sequence resource="EMBL-CDS" id="AAG58888"/>
    </conflict>
</comment>
<comment type="sequence caution" evidence="3">
    <conflict type="erroneous initiation">
        <sequence resource="EMBL-CDS" id="BAB38049"/>
    </conflict>
</comment>
<accession>Q8XC04</accession>
<accession>Q7A9J7</accession>
<gene>
    <name evidence="1" type="primary">ibpB</name>
    <name type="ordered locus">Z5182</name>
    <name type="ordered locus">ECs4626</name>
</gene>
<dbReference type="EMBL" id="AE005174">
    <property type="protein sequence ID" value="AAG58888.1"/>
    <property type="status" value="ALT_INIT"/>
    <property type="molecule type" value="Genomic_DNA"/>
</dbReference>
<dbReference type="EMBL" id="BA000007">
    <property type="protein sequence ID" value="BAB38049.1"/>
    <property type="status" value="ALT_INIT"/>
    <property type="molecule type" value="Genomic_DNA"/>
</dbReference>
<dbReference type="PIR" id="B91207">
    <property type="entry name" value="B91207"/>
</dbReference>
<dbReference type="PIR" id="D86053">
    <property type="entry name" value="D86053"/>
</dbReference>
<dbReference type="PIR" id="G65170">
    <property type="entry name" value="G65170"/>
</dbReference>
<dbReference type="RefSeq" id="NP_312653.2">
    <property type="nucleotide sequence ID" value="NC_002695.1"/>
</dbReference>
<dbReference type="RefSeq" id="WP_001243431.1">
    <property type="nucleotide sequence ID" value="NZ_VOAI01000011.1"/>
</dbReference>
<dbReference type="SMR" id="Q8XC04"/>
<dbReference type="STRING" id="155864.Z5182"/>
<dbReference type="GeneID" id="915410"/>
<dbReference type="GeneID" id="93778427"/>
<dbReference type="KEGG" id="ece:Z5182"/>
<dbReference type="KEGG" id="ecs:ECs_4626"/>
<dbReference type="PATRIC" id="fig|386585.9.peg.4833"/>
<dbReference type="eggNOG" id="COG0071">
    <property type="taxonomic scope" value="Bacteria"/>
</dbReference>
<dbReference type="HOGENOM" id="CLU_046737_4_2_6"/>
<dbReference type="OMA" id="NIERCDR"/>
<dbReference type="Proteomes" id="UP000000558">
    <property type="component" value="Chromosome"/>
</dbReference>
<dbReference type="Proteomes" id="UP000002519">
    <property type="component" value="Chromosome"/>
</dbReference>
<dbReference type="GO" id="GO:0005737">
    <property type="term" value="C:cytoplasm"/>
    <property type="evidence" value="ECO:0007669"/>
    <property type="project" value="UniProtKB-SubCell"/>
</dbReference>
<dbReference type="GO" id="GO:0050821">
    <property type="term" value="P:protein stabilization"/>
    <property type="evidence" value="ECO:0007669"/>
    <property type="project" value="UniProtKB-UniRule"/>
</dbReference>
<dbReference type="CDD" id="cd06470">
    <property type="entry name" value="ACD_IbpA-B_like"/>
    <property type="match status" value="1"/>
</dbReference>
<dbReference type="FunFam" id="2.60.40.790:FF:000005">
    <property type="entry name" value="Small heat shock protein IbpB"/>
    <property type="match status" value="1"/>
</dbReference>
<dbReference type="Gene3D" id="2.60.40.790">
    <property type="match status" value="1"/>
</dbReference>
<dbReference type="HAMAP" id="MF_02001">
    <property type="entry name" value="HSP20_IbpB"/>
    <property type="match status" value="1"/>
</dbReference>
<dbReference type="InterPro" id="IPR002068">
    <property type="entry name" value="A-crystallin/Hsp20_dom"/>
</dbReference>
<dbReference type="InterPro" id="IPR037913">
    <property type="entry name" value="ACD_IbpA/B"/>
</dbReference>
<dbReference type="InterPro" id="IPR008978">
    <property type="entry name" value="HSP20-like_chaperone"/>
</dbReference>
<dbReference type="InterPro" id="IPR022848">
    <property type="entry name" value="HSP20_IbpB"/>
</dbReference>
<dbReference type="NCBIfam" id="NF008618">
    <property type="entry name" value="PRK11597.1"/>
    <property type="match status" value="1"/>
</dbReference>
<dbReference type="PANTHER" id="PTHR47062">
    <property type="match status" value="1"/>
</dbReference>
<dbReference type="PANTHER" id="PTHR47062:SF2">
    <property type="entry name" value="SMALL HEAT SHOCK PROTEIN IBPB"/>
    <property type="match status" value="1"/>
</dbReference>
<dbReference type="Pfam" id="PF00011">
    <property type="entry name" value="HSP20"/>
    <property type="match status" value="1"/>
</dbReference>
<dbReference type="SUPFAM" id="SSF49764">
    <property type="entry name" value="HSP20-like chaperones"/>
    <property type="match status" value="1"/>
</dbReference>
<dbReference type="PROSITE" id="PS01031">
    <property type="entry name" value="SHSP"/>
    <property type="match status" value="1"/>
</dbReference>
<organism>
    <name type="scientific">Escherichia coli O157:H7</name>
    <dbReference type="NCBI Taxonomy" id="83334"/>
    <lineage>
        <taxon>Bacteria</taxon>
        <taxon>Pseudomonadati</taxon>
        <taxon>Pseudomonadota</taxon>
        <taxon>Gammaproteobacteria</taxon>
        <taxon>Enterobacterales</taxon>
        <taxon>Enterobacteriaceae</taxon>
        <taxon>Escherichia</taxon>
    </lineage>
</organism>
<protein>
    <recommendedName>
        <fullName evidence="1">Small heat shock protein IbpB</fullName>
    </recommendedName>
    <alternativeName>
        <fullName evidence="1">16 kDa heat shock protein B</fullName>
    </alternativeName>
</protein>
<feature type="chain" id="PRO_0000126029" description="Small heat shock protein IbpB">
    <location>
        <begin position="1"/>
        <end position="142"/>
    </location>
</feature>
<feature type="domain" description="sHSP" evidence="2">
    <location>
        <begin position="26"/>
        <end position="137"/>
    </location>
</feature>
<name>IBPB_ECO57</name>